<protein>
    <recommendedName>
        <fullName>Probable serine/threonine-protein kinase WNK1</fullName>
        <shortName>OsWNK1</shortName>
        <ecNumber>2.7.11.1</ecNumber>
    </recommendedName>
    <alternativeName>
        <fullName>Mitogen-activated protein kinase kinase 1</fullName>
    </alternativeName>
    <alternativeName>
        <fullName>Protein kinase with no lysine 1</fullName>
    </alternativeName>
</protein>
<evidence type="ECO:0000250" key="1">
    <source>
        <dbReference type="UniProtKB" id="Q9H4A3"/>
    </source>
</evidence>
<evidence type="ECO:0000250" key="2">
    <source>
        <dbReference type="UniProtKB" id="Q9JIH7"/>
    </source>
</evidence>
<evidence type="ECO:0000255" key="3">
    <source>
        <dbReference type="PROSITE-ProRule" id="PRU00159"/>
    </source>
</evidence>
<evidence type="ECO:0000256" key="4">
    <source>
        <dbReference type="SAM" id="MobiDB-lite"/>
    </source>
</evidence>
<evidence type="ECO:0000305" key="5"/>
<organism>
    <name type="scientific">Oryza sativa subsp. japonica</name>
    <name type="common">Rice</name>
    <dbReference type="NCBI Taxonomy" id="39947"/>
    <lineage>
        <taxon>Eukaryota</taxon>
        <taxon>Viridiplantae</taxon>
        <taxon>Streptophyta</taxon>
        <taxon>Embryophyta</taxon>
        <taxon>Tracheophyta</taxon>
        <taxon>Spermatophyta</taxon>
        <taxon>Magnoliopsida</taxon>
        <taxon>Liliopsida</taxon>
        <taxon>Poales</taxon>
        <taxon>Poaceae</taxon>
        <taxon>BOP clade</taxon>
        <taxon>Oryzoideae</taxon>
        <taxon>Oryzeae</taxon>
        <taxon>Oryzinae</taxon>
        <taxon>Oryza</taxon>
        <taxon>Oryza sativa</taxon>
    </lineage>
</organism>
<gene>
    <name type="primary">WNK1</name>
    <name type="synonym">MEK1</name>
    <name type="ordered locus">Os07g0572800</name>
    <name type="ordered locus">LOC_Os07g38530</name>
    <name type="ORF">OJ1121_A05.35-1</name>
    <name type="ORF">OJ1121_A05.35-2</name>
    <name type="ORF">OJ1699_E05.11-1</name>
    <name type="ORF">OJ1699_E05.11-2</name>
    <name type="ORF">OsJ_023858</name>
</gene>
<name>WNK1_ORYSJ</name>
<comment type="catalytic activity">
    <reaction>
        <text>L-seryl-[protein] + ATP = O-phospho-L-seryl-[protein] + ADP + H(+)</text>
        <dbReference type="Rhea" id="RHEA:17989"/>
        <dbReference type="Rhea" id="RHEA-COMP:9863"/>
        <dbReference type="Rhea" id="RHEA-COMP:11604"/>
        <dbReference type="ChEBI" id="CHEBI:15378"/>
        <dbReference type="ChEBI" id="CHEBI:29999"/>
        <dbReference type="ChEBI" id="CHEBI:30616"/>
        <dbReference type="ChEBI" id="CHEBI:83421"/>
        <dbReference type="ChEBI" id="CHEBI:456216"/>
        <dbReference type="EC" id="2.7.11.1"/>
    </reaction>
</comment>
<comment type="catalytic activity">
    <reaction>
        <text>L-threonyl-[protein] + ATP = O-phospho-L-threonyl-[protein] + ADP + H(+)</text>
        <dbReference type="Rhea" id="RHEA:46608"/>
        <dbReference type="Rhea" id="RHEA-COMP:11060"/>
        <dbReference type="Rhea" id="RHEA-COMP:11605"/>
        <dbReference type="ChEBI" id="CHEBI:15378"/>
        <dbReference type="ChEBI" id="CHEBI:30013"/>
        <dbReference type="ChEBI" id="CHEBI:30616"/>
        <dbReference type="ChEBI" id="CHEBI:61977"/>
        <dbReference type="ChEBI" id="CHEBI:456216"/>
        <dbReference type="EC" id="2.7.11.1"/>
    </reaction>
</comment>
<comment type="alternative products">
    <event type="alternative splicing"/>
    <isoform>
        <id>Q0D598-1</id>
        <name>1</name>
        <sequence type="displayed"/>
    </isoform>
    <isoform>
        <id>Q0D598-2</id>
        <name>2</name>
        <sequence type="described" ref="VSP_035532 VSP_035533"/>
    </isoform>
</comment>
<comment type="similarity">
    <text evidence="3">Belongs to the protein kinase superfamily. Ser/Thr protein kinase family. WNK subfamily.</text>
</comment>
<comment type="caution">
    <text evidence="1">Was named WNK/'with no lysine(K)' because key residues for catalysis, including the lysine involved in ATP binding, are either not conserved or differ compared to the residues described in other kinase family proteins.</text>
</comment>
<comment type="sequence caution" evidence="5">
    <conflict type="erroneous gene model prediction">
        <sequence resource="EMBL-CDS" id="BAC83145"/>
    </conflict>
</comment>
<comment type="sequence caution" evidence="5">
    <conflict type="erroneous initiation">
        <sequence resource="EMBL-CDS" id="BAC83145"/>
    </conflict>
</comment>
<comment type="sequence caution" evidence="5">
    <conflict type="erroneous initiation">
        <sequence resource="EMBL-CDS" id="BAD31874"/>
    </conflict>
</comment>
<comment type="sequence caution" evidence="5">
    <conflict type="erroneous gene model prediction">
        <sequence resource="EMBL-CDS" id="BAD31875"/>
    </conflict>
</comment>
<comment type="sequence caution" evidence="5">
    <conflict type="erroneous initiation">
        <sequence resource="EMBL-CDS" id="EAZ40375"/>
    </conflict>
</comment>
<feature type="chain" id="PRO_0000351670" description="Probable serine/threonine-protein kinase WNK1">
    <location>
        <begin position="1"/>
        <end position="704"/>
    </location>
</feature>
<feature type="domain" description="Protein kinase" evidence="3">
    <location>
        <begin position="27"/>
        <end position="284"/>
    </location>
</feature>
<feature type="region of interest" description="Disordered" evidence="4">
    <location>
        <begin position="499"/>
        <end position="521"/>
    </location>
</feature>
<feature type="active site" description="Proton acceptor" evidence="2">
    <location>
        <position position="174"/>
    </location>
</feature>
<feature type="binding site" evidence="1">
    <location>
        <begin position="107"/>
        <end position="110"/>
    </location>
    <ligand>
        <name>ATP</name>
        <dbReference type="ChEBI" id="CHEBI:30616"/>
    </ligand>
</feature>
<feature type="binding site" evidence="1">
    <location>
        <position position="157"/>
    </location>
    <ligand>
        <name>ATP</name>
        <dbReference type="ChEBI" id="CHEBI:30616"/>
    </ligand>
</feature>
<feature type="splice variant" id="VSP_035532" description="In isoform 2." evidence="5">
    <original>YHSRHP</original>
    <variation>PKGPAL</variation>
    <location>
        <begin position="649"/>
        <end position="654"/>
    </location>
</feature>
<feature type="splice variant" id="VSP_035533" description="In isoform 2." evidence="5">
    <location>
        <begin position="655"/>
        <end position="704"/>
    </location>
</feature>
<feature type="sequence conflict" description="In Ref. 5; AK100426." evidence="5" ref="5">
    <original>A</original>
    <variation>V</variation>
    <location>
        <position position="11"/>
    </location>
</feature>
<feature type="sequence conflict" description="In Ref. 5; AK100426." evidence="5" ref="5">
    <original>E</original>
    <variation>K</variation>
    <location>
        <position position="448"/>
    </location>
</feature>
<reference key="1">
    <citation type="journal article" date="2005" name="Nature">
        <title>The map-based sequence of the rice genome.</title>
        <authorList>
            <consortium name="International rice genome sequencing project (IRGSP)"/>
        </authorList>
    </citation>
    <scope>NUCLEOTIDE SEQUENCE [LARGE SCALE GENOMIC DNA]</scope>
    <source>
        <strain>cv. Nipponbare</strain>
    </source>
</reference>
<reference key="2">
    <citation type="journal article" date="2008" name="Nucleic Acids Res.">
        <title>The rice annotation project database (RAP-DB): 2008 update.</title>
        <authorList>
            <consortium name="The rice annotation project (RAP)"/>
        </authorList>
    </citation>
    <scope>GENOME REANNOTATION</scope>
    <source>
        <strain>cv. Nipponbare</strain>
    </source>
</reference>
<reference key="3">
    <citation type="journal article" date="2013" name="Rice">
        <title>Improvement of the Oryza sativa Nipponbare reference genome using next generation sequence and optical map data.</title>
        <authorList>
            <person name="Kawahara Y."/>
            <person name="de la Bastide M."/>
            <person name="Hamilton J.P."/>
            <person name="Kanamori H."/>
            <person name="McCombie W.R."/>
            <person name="Ouyang S."/>
            <person name="Schwartz D.C."/>
            <person name="Tanaka T."/>
            <person name="Wu J."/>
            <person name="Zhou S."/>
            <person name="Childs K.L."/>
            <person name="Davidson R.M."/>
            <person name="Lin H."/>
            <person name="Quesada-Ocampo L."/>
            <person name="Vaillancourt B."/>
            <person name="Sakai H."/>
            <person name="Lee S.S."/>
            <person name="Kim J."/>
            <person name="Numa H."/>
            <person name="Itoh T."/>
            <person name="Buell C.R."/>
            <person name="Matsumoto T."/>
        </authorList>
    </citation>
    <scope>GENOME REANNOTATION</scope>
    <source>
        <strain>cv. Nipponbare</strain>
    </source>
</reference>
<reference key="4">
    <citation type="journal article" date="2005" name="PLoS Biol.">
        <title>The genomes of Oryza sativa: a history of duplications.</title>
        <authorList>
            <person name="Yu J."/>
            <person name="Wang J."/>
            <person name="Lin W."/>
            <person name="Li S."/>
            <person name="Li H."/>
            <person name="Zhou J."/>
            <person name="Ni P."/>
            <person name="Dong W."/>
            <person name="Hu S."/>
            <person name="Zeng C."/>
            <person name="Zhang J."/>
            <person name="Zhang Y."/>
            <person name="Li R."/>
            <person name="Xu Z."/>
            <person name="Li S."/>
            <person name="Li X."/>
            <person name="Zheng H."/>
            <person name="Cong L."/>
            <person name="Lin L."/>
            <person name="Yin J."/>
            <person name="Geng J."/>
            <person name="Li G."/>
            <person name="Shi J."/>
            <person name="Liu J."/>
            <person name="Lv H."/>
            <person name="Li J."/>
            <person name="Wang J."/>
            <person name="Deng Y."/>
            <person name="Ran L."/>
            <person name="Shi X."/>
            <person name="Wang X."/>
            <person name="Wu Q."/>
            <person name="Li C."/>
            <person name="Ren X."/>
            <person name="Wang J."/>
            <person name="Wang X."/>
            <person name="Li D."/>
            <person name="Liu D."/>
            <person name="Zhang X."/>
            <person name="Ji Z."/>
            <person name="Zhao W."/>
            <person name="Sun Y."/>
            <person name="Zhang Z."/>
            <person name="Bao J."/>
            <person name="Han Y."/>
            <person name="Dong L."/>
            <person name="Ji J."/>
            <person name="Chen P."/>
            <person name="Wu S."/>
            <person name="Liu J."/>
            <person name="Xiao Y."/>
            <person name="Bu D."/>
            <person name="Tan J."/>
            <person name="Yang L."/>
            <person name="Ye C."/>
            <person name="Zhang J."/>
            <person name="Xu J."/>
            <person name="Zhou Y."/>
            <person name="Yu Y."/>
            <person name="Zhang B."/>
            <person name="Zhuang S."/>
            <person name="Wei H."/>
            <person name="Liu B."/>
            <person name="Lei M."/>
            <person name="Yu H."/>
            <person name="Li Y."/>
            <person name="Xu H."/>
            <person name="Wei S."/>
            <person name="He X."/>
            <person name="Fang L."/>
            <person name="Zhang Z."/>
            <person name="Zhang Y."/>
            <person name="Huang X."/>
            <person name="Su Z."/>
            <person name="Tong W."/>
            <person name="Li J."/>
            <person name="Tong Z."/>
            <person name="Li S."/>
            <person name="Ye J."/>
            <person name="Wang L."/>
            <person name="Fang L."/>
            <person name="Lei T."/>
            <person name="Chen C.-S."/>
            <person name="Chen H.-C."/>
            <person name="Xu Z."/>
            <person name="Li H."/>
            <person name="Huang H."/>
            <person name="Zhang F."/>
            <person name="Xu H."/>
            <person name="Li N."/>
            <person name="Zhao C."/>
            <person name="Li S."/>
            <person name="Dong L."/>
            <person name="Huang Y."/>
            <person name="Li L."/>
            <person name="Xi Y."/>
            <person name="Qi Q."/>
            <person name="Li W."/>
            <person name="Zhang B."/>
            <person name="Hu W."/>
            <person name="Zhang Y."/>
            <person name="Tian X."/>
            <person name="Jiao Y."/>
            <person name="Liang X."/>
            <person name="Jin J."/>
            <person name="Gao L."/>
            <person name="Zheng W."/>
            <person name="Hao B."/>
            <person name="Liu S.-M."/>
            <person name="Wang W."/>
            <person name="Yuan L."/>
            <person name="Cao M."/>
            <person name="McDermott J."/>
            <person name="Samudrala R."/>
            <person name="Wang J."/>
            <person name="Wong G.K.-S."/>
            <person name="Yang H."/>
        </authorList>
    </citation>
    <scope>NUCLEOTIDE SEQUENCE [LARGE SCALE GENOMIC DNA]</scope>
    <source>
        <strain>cv. Nipponbare</strain>
    </source>
</reference>
<reference key="5">
    <citation type="journal article" date="2003" name="Science">
        <title>Collection, mapping, and annotation of over 28,000 cDNA clones from japonica rice.</title>
        <authorList>
            <consortium name="The rice full-length cDNA consortium"/>
        </authorList>
    </citation>
    <scope>NUCLEOTIDE SEQUENCE [LARGE SCALE MRNA] (ISOFORM 1)</scope>
    <source>
        <strain>cv. Nipponbare</strain>
    </source>
</reference>
<sequence>MMGPKANAAAAGDLPEYAEVDPTGRYGRYNDVLGKGASKTVYRAFDEYQGMEVAWNQVKLHDFLQSPEDLERLYCEIHLLKTLKHRNIMKFYTSWVDVSRRNINFITEMFTSGTLRQYRQKHMRVNIWAVKHWCRQILSGLLYLHSHDPPIIHRDLKCDNIFVNGNQGEVKIGDLGLAAILRKSHAVHCVGTPEFMAPEVYEEEYNELVDIYSFGMCVLEMVTFEYPYSECTHPVQIYKKVISGTKPEALYKVKDPMVRQFVEKCLATASRRLSARELLKDPFLQVDDLVFCPGDGDYSLMNYLRQPYLEHAYSNVSMMSNGLSESIDEDTPTEDRWDCEDDDIKADGIDLFNGHEDEPLGNVDITIKGRKSEDGSIFLRLRIADNDGHVRNIYFPFDIEADTALSVATEMVAELDITDHEVTRIAEMIDGEVSALVPDWRPGPGIEESQDTTYCHNCGSNVSSCGSLYAYMSSAARGCQCAELHGRFEEITFQANGEQTDLQDSGGSSDDGGGQTQHVKDQEAVHSNGFVQMGRRGPRDQFCFSSFQEQSCSPRHYEYDTSLQAKGFDMKHEVKMAKYKARKMAHLRRAIHPSLDFDNLNGERRMKSSLNKLQSFHIGKNHNFRIPTCERSPGARDAEEDPDIFNLAYHSRHPDPGAQRARHCEVDAQSSPDLMFTARSYYTGAQLPTNLPRTKSVTLNAVDA</sequence>
<dbReference type="EC" id="2.7.11.1"/>
<dbReference type="EMBL" id="AP003845">
    <property type="protein sequence ID" value="BAC83145.1"/>
    <property type="status" value="ALT_INIT"/>
    <property type="molecule type" value="Genomic_DNA"/>
</dbReference>
<dbReference type="EMBL" id="AP003845">
    <property type="protein sequence ID" value="BAC83146.1"/>
    <property type="status" value="ALT_SEQ"/>
    <property type="molecule type" value="Genomic_DNA"/>
</dbReference>
<dbReference type="EMBL" id="AP005908">
    <property type="protein sequence ID" value="BAD31874.1"/>
    <property type="status" value="ALT_INIT"/>
    <property type="molecule type" value="Genomic_DNA"/>
</dbReference>
<dbReference type="EMBL" id="AP005908">
    <property type="protein sequence ID" value="BAD31875.1"/>
    <property type="status" value="ALT_SEQ"/>
    <property type="molecule type" value="Genomic_DNA"/>
</dbReference>
<dbReference type="EMBL" id="AP008213">
    <property type="protein sequence ID" value="BAF21975.1"/>
    <property type="molecule type" value="Genomic_DNA"/>
</dbReference>
<dbReference type="EMBL" id="AP014963">
    <property type="protein sequence ID" value="BAT02251.1"/>
    <property type="molecule type" value="Genomic_DNA"/>
</dbReference>
<dbReference type="EMBL" id="CM000144">
    <property type="protein sequence ID" value="EAZ40375.1"/>
    <property type="status" value="ALT_INIT"/>
    <property type="molecule type" value="Genomic_DNA"/>
</dbReference>
<dbReference type="EMBL" id="AK100426">
    <property type="status" value="NOT_ANNOTATED_CDS"/>
    <property type="molecule type" value="mRNA"/>
</dbReference>
<dbReference type="RefSeq" id="XP_015647040.1">
    <property type="nucleotide sequence ID" value="XM_015791554.1"/>
</dbReference>
<dbReference type="SMR" id="Q0D598"/>
<dbReference type="FunCoup" id="Q0D598">
    <property type="interactions" value="1778"/>
</dbReference>
<dbReference type="STRING" id="39947.Q0D598"/>
<dbReference type="iPTMnet" id="Q0D598"/>
<dbReference type="PaxDb" id="39947-Q0D598"/>
<dbReference type="EnsemblPlants" id="Os07t0572800-01">
    <molecule id="Q0D598-1"/>
    <property type="protein sequence ID" value="Os07t0572800-01"/>
    <property type="gene ID" value="Os07g0572800"/>
</dbReference>
<dbReference type="Gramene" id="Os07t0572800-01">
    <molecule id="Q0D598-1"/>
    <property type="protein sequence ID" value="Os07t0572800-01"/>
    <property type="gene ID" value="Os07g0572800"/>
</dbReference>
<dbReference type="KEGG" id="dosa:Os07g0572800"/>
<dbReference type="eggNOG" id="KOG0584">
    <property type="taxonomic scope" value="Eukaryota"/>
</dbReference>
<dbReference type="HOGENOM" id="CLU_000288_142_2_1"/>
<dbReference type="InParanoid" id="Q0D598"/>
<dbReference type="OMA" id="HYEYDTS"/>
<dbReference type="OrthoDB" id="4062651at2759"/>
<dbReference type="Proteomes" id="UP000000763">
    <property type="component" value="Chromosome 7"/>
</dbReference>
<dbReference type="Proteomes" id="UP000007752">
    <property type="component" value="Chromosome 7"/>
</dbReference>
<dbReference type="Proteomes" id="UP000059680">
    <property type="component" value="Chromosome 7"/>
</dbReference>
<dbReference type="ExpressionAtlas" id="Q0D598">
    <property type="expression patterns" value="baseline and differential"/>
</dbReference>
<dbReference type="GO" id="GO:0005737">
    <property type="term" value="C:cytoplasm"/>
    <property type="evidence" value="ECO:0000318"/>
    <property type="project" value="GO_Central"/>
</dbReference>
<dbReference type="GO" id="GO:0005524">
    <property type="term" value="F:ATP binding"/>
    <property type="evidence" value="ECO:0007669"/>
    <property type="project" value="UniProtKB-KW"/>
</dbReference>
<dbReference type="GO" id="GO:0106310">
    <property type="term" value="F:protein serine kinase activity"/>
    <property type="evidence" value="ECO:0007669"/>
    <property type="project" value="RHEA"/>
</dbReference>
<dbReference type="GO" id="GO:0004674">
    <property type="term" value="F:protein serine/threonine kinase activity"/>
    <property type="evidence" value="ECO:0000318"/>
    <property type="project" value="GO_Central"/>
</dbReference>
<dbReference type="GO" id="GO:0035556">
    <property type="term" value="P:intracellular signal transduction"/>
    <property type="evidence" value="ECO:0000318"/>
    <property type="project" value="GO_Central"/>
</dbReference>
<dbReference type="CDD" id="cd13983">
    <property type="entry name" value="STKc_WNK"/>
    <property type="match status" value="1"/>
</dbReference>
<dbReference type="FunFam" id="3.30.200.20:FF:000075">
    <property type="entry name" value="Probable serine/threonine-protein kinase WNK1"/>
    <property type="match status" value="1"/>
</dbReference>
<dbReference type="FunFam" id="1.10.510.10:FF:000046">
    <property type="entry name" value="probable serine/threonine-protein kinase WNK9"/>
    <property type="match status" value="1"/>
</dbReference>
<dbReference type="Gene3D" id="3.10.20.90">
    <property type="entry name" value="Phosphatidylinositol 3-kinase Catalytic Subunit, Chain A, domain 1"/>
    <property type="match status" value="1"/>
</dbReference>
<dbReference type="Gene3D" id="3.30.200.20">
    <property type="entry name" value="Phosphorylase Kinase, domain 1"/>
    <property type="match status" value="1"/>
</dbReference>
<dbReference type="Gene3D" id="1.10.510.10">
    <property type="entry name" value="Transferase(Phosphotransferase) domain 1"/>
    <property type="match status" value="1"/>
</dbReference>
<dbReference type="InterPro" id="IPR011009">
    <property type="entry name" value="Kinase-like_dom_sf"/>
</dbReference>
<dbReference type="InterPro" id="IPR000719">
    <property type="entry name" value="Prot_kinase_dom"/>
</dbReference>
<dbReference type="InterPro" id="IPR008271">
    <property type="entry name" value="Ser/Thr_kinase_AS"/>
</dbReference>
<dbReference type="InterPro" id="IPR050588">
    <property type="entry name" value="WNK_Ser-Thr_kinase"/>
</dbReference>
<dbReference type="PANTHER" id="PTHR13902">
    <property type="entry name" value="SERINE/THREONINE-PROTEIN KINASE WNK WITH NO LYSINE -RELATED"/>
    <property type="match status" value="1"/>
</dbReference>
<dbReference type="Pfam" id="PF00069">
    <property type="entry name" value="Pkinase"/>
    <property type="match status" value="1"/>
</dbReference>
<dbReference type="SMART" id="SM00220">
    <property type="entry name" value="S_TKc"/>
    <property type="match status" value="1"/>
</dbReference>
<dbReference type="SUPFAM" id="SSF56112">
    <property type="entry name" value="Protein kinase-like (PK-like)"/>
    <property type="match status" value="1"/>
</dbReference>
<dbReference type="PROSITE" id="PS50011">
    <property type="entry name" value="PROTEIN_KINASE_DOM"/>
    <property type="match status" value="1"/>
</dbReference>
<dbReference type="PROSITE" id="PS00108">
    <property type="entry name" value="PROTEIN_KINASE_ST"/>
    <property type="match status" value="1"/>
</dbReference>
<keyword id="KW-0025">Alternative splicing</keyword>
<keyword id="KW-0067">ATP-binding</keyword>
<keyword id="KW-0418">Kinase</keyword>
<keyword id="KW-0547">Nucleotide-binding</keyword>
<keyword id="KW-1185">Reference proteome</keyword>
<keyword id="KW-0723">Serine/threonine-protein kinase</keyword>
<keyword id="KW-0808">Transferase</keyword>
<accession>Q0D598</accession>
<accession>A0A0P0X875</accession>
<accession>Q6ZL25</accession>
<accession>Q6ZL26</accession>
<proteinExistence type="evidence at transcript level"/>